<organism>
    <name type="scientific">Mus musculus</name>
    <name type="common">Mouse</name>
    <dbReference type="NCBI Taxonomy" id="10090"/>
    <lineage>
        <taxon>Eukaryota</taxon>
        <taxon>Metazoa</taxon>
        <taxon>Chordata</taxon>
        <taxon>Craniata</taxon>
        <taxon>Vertebrata</taxon>
        <taxon>Euteleostomi</taxon>
        <taxon>Mammalia</taxon>
        <taxon>Eutheria</taxon>
        <taxon>Euarchontoglires</taxon>
        <taxon>Glires</taxon>
        <taxon>Rodentia</taxon>
        <taxon>Myomorpha</taxon>
        <taxon>Muroidea</taxon>
        <taxon>Muridae</taxon>
        <taxon>Murinae</taxon>
        <taxon>Mus</taxon>
        <taxon>Mus</taxon>
    </lineage>
</organism>
<keyword id="KW-0156">Chromatin regulator</keyword>
<keyword id="KW-0223">Dioxygenase</keyword>
<keyword id="KW-0408">Iron</keyword>
<keyword id="KW-1017">Isopeptide bond</keyword>
<keyword id="KW-0479">Metal-binding</keyword>
<keyword id="KW-0539">Nucleus</keyword>
<keyword id="KW-0560">Oxidoreductase</keyword>
<keyword id="KW-0597">Phosphoprotein</keyword>
<keyword id="KW-1185">Reference proteome</keyword>
<keyword id="KW-0804">Transcription</keyword>
<keyword id="KW-0805">Transcription regulation</keyword>
<keyword id="KW-0832">Ubl conjugation</keyword>
<name>RSBN1_MOUSE</name>
<dbReference type="EC" id="1.14.11.-" evidence="6"/>
<dbReference type="EMBL" id="AB101658">
    <property type="protein sequence ID" value="BAC81206.1"/>
    <property type="molecule type" value="mRNA"/>
</dbReference>
<dbReference type="EMBL" id="CU210953">
    <property type="protein sequence ID" value="CAQ12178.1"/>
    <property type="molecule type" value="Genomic_DNA"/>
</dbReference>
<dbReference type="EMBL" id="CU210868">
    <property type="protein sequence ID" value="CAQ12178.1"/>
    <property type="status" value="JOINED"/>
    <property type="molecule type" value="Genomic_DNA"/>
</dbReference>
<dbReference type="EMBL" id="CU210868">
    <property type="protein sequence ID" value="CAQ12904.1"/>
    <property type="status" value="ALT_INIT"/>
    <property type="molecule type" value="Genomic_DNA"/>
</dbReference>
<dbReference type="EMBL" id="CU210953">
    <property type="protein sequence ID" value="CAQ12904.1"/>
    <property type="status" value="JOINED"/>
    <property type="molecule type" value="Genomic_DNA"/>
</dbReference>
<dbReference type="EMBL" id="BC094667">
    <property type="protein sequence ID" value="AAH94667.1"/>
    <property type="status" value="ALT_INIT"/>
    <property type="molecule type" value="mRNA"/>
</dbReference>
<dbReference type="EMBL" id="BC139213">
    <property type="protein sequence ID" value="AAI39214.1"/>
    <property type="molecule type" value="mRNA"/>
</dbReference>
<dbReference type="EMBL" id="BC139215">
    <property type="protein sequence ID" value="AAI39216.1"/>
    <property type="molecule type" value="mRNA"/>
</dbReference>
<dbReference type="EMBL" id="AK087685">
    <property type="protein sequence ID" value="BAC39967.1"/>
    <property type="status" value="ALT_INIT"/>
    <property type="molecule type" value="mRNA"/>
</dbReference>
<dbReference type="EMBL" id="AK138603">
    <property type="protein sequence ID" value="BAE23712.1"/>
    <property type="status" value="ALT_INIT"/>
    <property type="molecule type" value="mRNA"/>
</dbReference>
<dbReference type="EMBL" id="AK122577">
    <property type="protein sequence ID" value="BAC65859.1"/>
    <property type="molecule type" value="mRNA"/>
</dbReference>
<dbReference type="CCDS" id="CCDS17697.1"/>
<dbReference type="RefSeq" id="NP_001343485.1">
    <property type="nucleotide sequence ID" value="NM_001356556.1"/>
</dbReference>
<dbReference type="RefSeq" id="NP_766272.2">
    <property type="nucleotide sequence ID" value="NM_172684.3"/>
</dbReference>
<dbReference type="RefSeq" id="XP_006501465.1">
    <property type="nucleotide sequence ID" value="XM_006501402.3"/>
</dbReference>
<dbReference type="SMR" id="Q80T69"/>
<dbReference type="BioGRID" id="230881">
    <property type="interactions" value="4"/>
</dbReference>
<dbReference type="FunCoup" id="Q80T69">
    <property type="interactions" value="4244"/>
</dbReference>
<dbReference type="IntAct" id="Q80T69">
    <property type="interactions" value="1"/>
</dbReference>
<dbReference type="STRING" id="10090.ENSMUSP00000069246"/>
<dbReference type="GlyGen" id="Q80T69">
    <property type="glycosylation" value="1 site"/>
</dbReference>
<dbReference type="iPTMnet" id="Q80T69"/>
<dbReference type="PhosphoSitePlus" id="Q80T69"/>
<dbReference type="jPOST" id="Q80T69"/>
<dbReference type="PaxDb" id="10090-ENSMUSP00000140185"/>
<dbReference type="PeptideAtlas" id="Q80T69"/>
<dbReference type="ProteomicsDB" id="262713"/>
<dbReference type="Pumba" id="Q80T69"/>
<dbReference type="Antibodypedia" id="46942">
    <property type="antibodies" value="103 antibodies from 20 providers"/>
</dbReference>
<dbReference type="DNASU" id="229675"/>
<dbReference type="Ensembl" id="ENSMUST00000051139.13">
    <property type="protein sequence ID" value="ENSMUSP00000058934.8"/>
    <property type="gene ID" value="ENSMUSG00000044098.15"/>
</dbReference>
<dbReference type="Ensembl" id="ENSMUST00000068879.11">
    <property type="protein sequence ID" value="ENSMUSP00000069246.5"/>
    <property type="gene ID" value="ENSMUSG00000044098.15"/>
</dbReference>
<dbReference type="GeneID" id="229675"/>
<dbReference type="KEGG" id="mmu:229675"/>
<dbReference type="UCSC" id="uc008qtw.1">
    <property type="organism name" value="mouse"/>
</dbReference>
<dbReference type="AGR" id="MGI:2444993"/>
<dbReference type="CTD" id="54665"/>
<dbReference type="MGI" id="MGI:2444993">
    <property type="gene designation" value="Rsbn1"/>
</dbReference>
<dbReference type="VEuPathDB" id="HostDB:ENSMUSG00000044098"/>
<dbReference type="eggNOG" id="KOG4425">
    <property type="taxonomic scope" value="Eukaryota"/>
</dbReference>
<dbReference type="GeneTree" id="ENSGT00390000001969"/>
<dbReference type="HOGENOM" id="CLU_009952_1_0_1"/>
<dbReference type="InParanoid" id="Q80T69"/>
<dbReference type="OMA" id="SQCMENI"/>
<dbReference type="OrthoDB" id="6020087at2759"/>
<dbReference type="PhylomeDB" id="Q80T69"/>
<dbReference type="TreeFam" id="TF323256"/>
<dbReference type="BioGRID-ORCS" id="229675">
    <property type="hits" value="5 hits in 78 CRISPR screens"/>
</dbReference>
<dbReference type="ChiTaRS" id="Rsbn1">
    <property type="organism name" value="mouse"/>
</dbReference>
<dbReference type="PRO" id="PR:Q80T69"/>
<dbReference type="Proteomes" id="UP000000589">
    <property type="component" value="Chromosome 3"/>
</dbReference>
<dbReference type="RNAct" id="Q80T69">
    <property type="molecule type" value="protein"/>
</dbReference>
<dbReference type="Bgee" id="ENSMUSG00000044098">
    <property type="expression patterns" value="Expressed in spermatid and 241 other cell types or tissues"/>
</dbReference>
<dbReference type="ExpressionAtlas" id="Q80T69">
    <property type="expression patterns" value="baseline and differential"/>
</dbReference>
<dbReference type="GO" id="GO:0005634">
    <property type="term" value="C:nucleus"/>
    <property type="evidence" value="ECO:0000314"/>
    <property type="project" value="MGI"/>
</dbReference>
<dbReference type="GO" id="GO:0035575">
    <property type="term" value="F:histone H4K20 demethylase activity"/>
    <property type="evidence" value="ECO:0000314"/>
    <property type="project" value="UniProtKB"/>
</dbReference>
<dbReference type="GO" id="GO:0046872">
    <property type="term" value="F:metal ion binding"/>
    <property type="evidence" value="ECO:0007669"/>
    <property type="project" value="UniProtKB-KW"/>
</dbReference>
<dbReference type="InterPro" id="IPR026306">
    <property type="entry name" value="RSBN1/Dpy-21"/>
</dbReference>
<dbReference type="PANTHER" id="PTHR13354:SF8">
    <property type="entry name" value="LYSINE-SPECIFIC DEMETHYLASE 9"/>
    <property type="match status" value="1"/>
</dbReference>
<dbReference type="PANTHER" id="PTHR13354">
    <property type="entry name" value="ROUND SPERMATID BASIC PROTEIN 1"/>
    <property type="match status" value="1"/>
</dbReference>
<feature type="chain" id="PRO_0000299413" description="Lysine-specific demethylase 9">
    <location>
        <begin position="1"/>
        <end position="795"/>
    </location>
</feature>
<feature type="region of interest" description="Disordered" evidence="4">
    <location>
        <begin position="64"/>
        <end position="158"/>
    </location>
</feature>
<feature type="region of interest" description="Disordered" evidence="4">
    <location>
        <begin position="178"/>
        <end position="248"/>
    </location>
</feature>
<feature type="region of interest" description="Disordered" evidence="4">
    <location>
        <begin position="774"/>
        <end position="795"/>
    </location>
</feature>
<feature type="short sequence motif" description="Nuclear localization signal" evidence="3">
    <location>
        <begin position="252"/>
        <end position="263"/>
    </location>
</feature>
<feature type="compositionally biased region" description="Pro residues" evidence="4">
    <location>
        <begin position="122"/>
        <end position="150"/>
    </location>
</feature>
<feature type="compositionally biased region" description="Basic residues" evidence="4">
    <location>
        <begin position="182"/>
        <end position="197"/>
    </location>
</feature>
<feature type="compositionally biased region" description="Basic and acidic residues" evidence="4">
    <location>
        <begin position="210"/>
        <end position="221"/>
    </location>
</feature>
<feature type="compositionally biased region" description="Basic and acidic residues" evidence="4">
    <location>
        <begin position="232"/>
        <end position="248"/>
    </location>
</feature>
<feature type="compositionally biased region" description="Polar residues" evidence="4">
    <location>
        <begin position="784"/>
        <end position="795"/>
    </location>
</feature>
<feature type="binding site" evidence="2">
    <location>
        <position position="579"/>
    </location>
    <ligand>
        <name>2-oxoglutarate</name>
        <dbReference type="ChEBI" id="CHEBI:16810"/>
    </ligand>
</feature>
<feature type="binding site" evidence="2">
    <location>
        <position position="582"/>
    </location>
    <ligand>
        <name>Fe cation</name>
        <dbReference type="ChEBI" id="CHEBI:24875"/>
        <note>catalytic</note>
    </ligand>
</feature>
<feature type="binding site" evidence="2">
    <location>
        <position position="584"/>
    </location>
    <ligand>
        <name>Fe cation</name>
        <dbReference type="ChEBI" id="CHEBI:24875"/>
        <note>catalytic</note>
    </ligand>
</feature>
<feature type="binding site" evidence="2">
    <location>
        <position position="676"/>
    </location>
    <ligand>
        <name>2-oxoglutarate</name>
        <dbReference type="ChEBI" id="CHEBI:16810"/>
    </ligand>
</feature>
<feature type="binding site" evidence="2">
    <location>
        <position position="684"/>
    </location>
    <ligand>
        <name>Fe cation</name>
        <dbReference type="ChEBI" id="CHEBI:24875"/>
        <note>catalytic</note>
    </ligand>
</feature>
<feature type="modified residue" description="Phosphoserine" evidence="1">
    <location>
        <position position="80"/>
    </location>
</feature>
<feature type="cross-link" description="Glycyl lysine isopeptide (Lys-Gly) (interchain with G-Cter in SUMO2)" evidence="1">
    <location>
        <position position="290"/>
    </location>
</feature>
<feature type="cross-link" description="Glycyl lysine isopeptide (Lys-Gly) (interchain with G-Cter in SUMO2)" evidence="1">
    <location>
        <position position="313"/>
    </location>
</feature>
<feature type="cross-link" description="Glycyl lysine isopeptide (Lys-Gly) (interchain with G-Cter in SUMO2)" evidence="1">
    <location>
        <position position="734"/>
    </location>
</feature>
<feature type="cross-link" description="Glycyl lysine isopeptide (Lys-Gly) (interchain with G-Cter in SUMO2)" evidence="1">
    <location>
        <position position="774"/>
    </location>
</feature>
<feature type="sequence conflict" description="In Ref. 3; AAH94667." evidence="8" ref="3">
    <location>
        <begin position="255"/>
        <end position="256"/>
    </location>
</feature>
<protein>
    <recommendedName>
        <fullName evidence="7">Lysine-specific demethylase 9</fullName>
        <shortName evidence="7">KDM9</shortName>
        <ecNumber evidence="6">1.14.11.-</ecNumber>
    </recommendedName>
    <alternativeName>
        <fullName>Round spermatid basic protein 1</fullName>
        <shortName>Rosbin</shortName>
    </alternativeName>
</protein>
<reference key="1">
    <citation type="journal article" date="2004" name="Biol. Reprod.">
        <title>Rosbin: a novel homeobox-like protein gene expressed exclusively in round spermatids.</title>
        <authorList>
            <person name="Takahashi T."/>
            <person name="Tanaka H."/>
            <person name="Iguchi N."/>
            <person name="Kitamura K."/>
            <person name="Chen Y."/>
            <person name="Maekawa M."/>
            <person name="Nishimura H."/>
            <person name="Ohta H."/>
            <person name="Miyagawa Y."/>
            <person name="Matsumiya K."/>
            <person name="Okuyama A."/>
            <person name="Nishimune Y."/>
        </authorList>
    </citation>
    <scope>NUCLEOTIDE SEQUENCE [MRNA]</scope>
    <scope>SUBCELLULAR LOCATION</scope>
    <scope>PHOSPHORYLATION</scope>
    <scope>TISSUE SPECIFICITY</scope>
    <scope>DEVELOPMENTAL STAGE</scope>
</reference>
<reference key="2">
    <citation type="journal article" date="2009" name="PLoS Biol.">
        <title>Lineage-specific biology revealed by a finished genome assembly of the mouse.</title>
        <authorList>
            <person name="Church D.M."/>
            <person name="Goodstadt L."/>
            <person name="Hillier L.W."/>
            <person name="Zody M.C."/>
            <person name="Goldstein S."/>
            <person name="She X."/>
            <person name="Bult C.J."/>
            <person name="Agarwala R."/>
            <person name="Cherry J.L."/>
            <person name="DiCuccio M."/>
            <person name="Hlavina W."/>
            <person name="Kapustin Y."/>
            <person name="Meric P."/>
            <person name="Maglott D."/>
            <person name="Birtle Z."/>
            <person name="Marques A.C."/>
            <person name="Graves T."/>
            <person name="Zhou S."/>
            <person name="Teague B."/>
            <person name="Potamousis K."/>
            <person name="Churas C."/>
            <person name="Place M."/>
            <person name="Herschleb J."/>
            <person name="Runnheim R."/>
            <person name="Forrest D."/>
            <person name="Amos-Landgraf J."/>
            <person name="Schwartz D.C."/>
            <person name="Cheng Z."/>
            <person name="Lindblad-Toh K."/>
            <person name="Eichler E.E."/>
            <person name="Ponting C.P."/>
        </authorList>
    </citation>
    <scope>NUCLEOTIDE SEQUENCE [LARGE SCALE GENOMIC DNA]</scope>
    <source>
        <strain>C57BL/6J</strain>
    </source>
</reference>
<reference key="3">
    <citation type="journal article" date="2004" name="Genome Res.">
        <title>The status, quality, and expansion of the NIH full-length cDNA project: the Mammalian Gene Collection (MGC).</title>
        <authorList>
            <consortium name="The MGC Project Team"/>
        </authorList>
    </citation>
    <scope>NUCLEOTIDE SEQUENCE [LARGE SCALE MRNA]</scope>
    <source>
        <strain>C57BL/6J</strain>
        <tissue>Brain</tissue>
    </source>
</reference>
<reference key="4">
    <citation type="journal article" date="2005" name="Science">
        <title>The transcriptional landscape of the mammalian genome.</title>
        <authorList>
            <person name="Carninci P."/>
            <person name="Kasukawa T."/>
            <person name="Katayama S."/>
            <person name="Gough J."/>
            <person name="Frith M.C."/>
            <person name="Maeda N."/>
            <person name="Oyama R."/>
            <person name="Ravasi T."/>
            <person name="Lenhard B."/>
            <person name="Wells C."/>
            <person name="Kodzius R."/>
            <person name="Shimokawa K."/>
            <person name="Bajic V.B."/>
            <person name="Brenner S.E."/>
            <person name="Batalov S."/>
            <person name="Forrest A.R."/>
            <person name="Zavolan M."/>
            <person name="Davis M.J."/>
            <person name="Wilming L.G."/>
            <person name="Aidinis V."/>
            <person name="Allen J.E."/>
            <person name="Ambesi-Impiombato A."/>
            <person name="Apweiler R."/>
            <person name="Aturaliya R.N."/>
            <person name="Bailey T.L."/>
            <person name="Bansal M."/>
            <person name="Baxter L."/>
            <person name="Beisel K.W."/>
            <person name="Bersano T."/>
            <person name="Bono H."/>
            <person name="Chalk A.M."/>
            <person name="Chiu K.P."/>
            <person name="Choudhary V."/>
            <person name="Christoffels A."/>
            <person name="Clutterbuck D.R."/>
            <person name="Crowe M.L."/>
            <person name="Dalla E."/>
            <person name="Dalrymple B.P."/>
            <person name="de Bono B."/>
            <person name="Della Gatta G."/>
            <person name="di Bernardo D."/>
            <person name="Down T."/>
            <person name="Engstrom P."/>
            <person name="Fagiolini M."/>
            <person name="Faulkner G."/>
            <person name="Fletcher C.F."/>
            <person name="Fukushima T."/>
            <person name="Furuno M."/>
            <person name="Futaki S."/>
            <person name="Gariboldi M."/>
            <person name="Georgii-Hemming P."/>
            <person name="Gingeras T.R."/>
            <person name="Gojobori T."/>
            <person name="Green R.E."/>
            <person name="Gustincich S."/>
            <person name="Harbers M."/>
            <person name="Hayashi Y."/>
            <person name="Hensch T.K."/>
            <person name="Hirokawa N."/>
            <person name="Hill D."/>
            <person name="Huminiecki L."/>
            <person name="Iacono M."/>
            <person name="Ikeo K."/>
            <person name="Iwama A."/>
            <person name="Ishikawa T."/>
            <person name="Jakt M."/>
            <person name="Kanapin A."/>
            <person name="Katoh M."/>
            <person name="Kawasawa Y."/>
            <person name="Kelso J."/>
            <person name="Kitamura H."/>
            <person name="Kitano H."/>
            <person name="Kollias G."/>
            <person name="Krishnan S.P."/>
            <person name="Kruger A."/>
            <person name="Kummerfeld S.K."/>
            <person name="Kurochkin I.V."/>
            <person name="Lareau L.F."/>
            <person name="Lazarevic D."/>
            <person name="Lipovich L."/>
            <person name="Liu J."/>
            <person name="Liuni S."/>
            <person name="McWilliam S."/>
            <person name="Madan Babu M."/>
            <person name="Madera M."/>
            <person name="Marchionni L."/>
            <person name="Matsuda H."/>
            <person name="Matsuzawa S."/>
            <person name="Miki H."/>
            <person name="Mignone F."/>
            <person name="Miyake S."/>
            <person name="Morris K."/>
            <person name="Mottagui-Tabar S."/>
            <person name="Mulder N."/>
            <person name="Nakano N."/>
            <person name="Nakauchi H."/>
            <person name="Ng P."/>
            <person name="Nilsson R."/>
            <person name="Nishiguchi S."/>
            <person name="Nishikawa S."/>
            <person name="Nori F."/>
            <person name="Ohara O."/>
            <person name="Okazaki Y."/>
            <person name="Orlando V."/>
            <person name="Pang K.C."/>
            <person name="Pavan W.J."/>
            <person name="Pavesi G."/>
            <person name="Pesole G."/>
            <person name="Petrovsky N."/>
            <person name="Piazza S."/>
            <person name="Reed J."/>
            <person name="Reid J.F."/>
            <person name="Ring B.Z."/>
            <person name="Ringwald M."/>
            <person name="Rost B."/>
            <person name="Ruan Y."/>
            <person name="Salzberg S.L."/>
            <person name="Sandelin A."/>
            <person name="Schneider C."/>
            <person name="Schoenbach C."/>
            <person name="Sekiguchi K."/>
            <person name="Semple C.A."/>
            <person name="Seno S."/>
            <person name="Sessa L."/>
            <person name="Sheng Y."/>
            <person name="Shibata Y."/>
            <person name="Shimada H."/>
            <person name="Shimada K."/>
            <person name="Silva D."/>
            <person name="Sinclair B."/>
            <person name="Sperling S."/>
            <person name="Stupka E."/>
            <person name="Sugiura K."/>
            <person name="Sultana R."/>
            <person name="Takenaka Y."/>
            <person name="Taki K."/>
            <person name="Tammoja K."/>
            <person name="Tan S.L."/>
            <person name="Tang S."/>
            <person name="Taylor M.S."/>
            <person name="Tegner J."/>
            <person name="Teichmann S.A."/>
            <person name="Ueda H.R."/>
            <person name="van Nimwegen E."/>
            <person name="Verardo R."/>
            <person name="Wei C.L."/>
            <person name="Yagi K."/>
            <person name="Yamanishi H."/>
            <person name="Zabarovsky E."/>
            <person name="Zhu S."/>
            <person name="Zimmer A."/>
            <person name="Hide W."/>
            <person name="Bult C."/>
            <person name="Grimmond S.M."/>
            <person name="Teasdale R.D."/>
            <person name="Liu E.T."/>
            <person name="Brusic V."/>
            <person name="Quackenbush J."/>
            <person name="Wahlestedt C."/>
            <person name="Mattick J.S."/>
            <person name="Hume D.A."/>
            <person name="Kai C."/>
            <person name="Sasaki D."/>
            <person name="Tomaru Y."/>
            <person name="Fukuda S."/>
            <person name="Kanamori-Katayama M."/>
            <person name="Suzuki M."/>
            <person name="Aoki J."/>
            <person name="Arakawa T."/>
            <person name="Iida J."/>
            <person name="Imamura K."/>
            <person name="Itoh M."/>
            <person name="Kato T."/>
            <person name="Kawaji H."/>
            <person name="Kawagashira N."/>
            <person name="Kawashima T."/>
            <person name="Kojima M."/>
            <person name="Kondo S."/>
            <person name="Konno H."/>
            <person name="Nakano K."/>
            <person name="Ninomiya N."/>
            <person name="Nishio T."/>
            <person name="Okada M."/>
            <person name="Plessy C."/>
            <person name="Shibata K."/>
            <person name="Shiraki T."/>
            <person name="Suzuki S."/>
            <person name="Tagami M."/>
            <person name="Waki K."/>
            <person name="Watahiki A."/>
            <person name="Okamura-Oho Y."/>
            <person name="Suzuki H."/>
            <person name="Kawai J."/>
            <person name="Hayashizaki Y."/>
        </authorList>
    </citation>
    <scope>NUCLEOTIDE SEQUENCE [LARGE SCALE MRNA] OF 43-795</scope>
    <source>
        <strain>C57BL/6J</strain>
        <tissue>Ovary</tissue>
        <tissue>Spinal cord</tissue>
    </source>
</reference>
<reference key="5">
    <citation type="journal article" date="2003" name="DNA Res.">
        <title>Prediction of the coding sequences of mouse homologues of KIAA gene: II. The complete nucleotide sequences of 400 mouse KIAA-homologous cDNAs identified by screening of terminal sequences of cDNA clones randomly sampled from size-fractionated libraries.</title>
        <authorList>
            <person name="Okazaki N."/>
            <person name="Kikuno R."/>
            <person name="Ohara R."/>
            <person name="Inamoto S."/>
            <person name="Aizawa H."/>
            <person name="Yuasa S."/>
            <person name="Nakajima D."/>
            <person name="Nagase T."/>
            <person name="Ohara O."/>
            <person name="Koga H."/>
        </authorList>
    </citation>
    <scope>NUCLEOTIDE SEQUENCE [LARGE SCALE MRNA] OF 46-795</scope>
    <source>
        <tissue>Brain</tissue>
    </source>
</reference>
<reference key="6">
    <citation type="journal article" date="2017" name="Cell">
        <title>Dynamic Control of X Chromosome Conformation and Repression by a Histone H4K20 Demethylase.</title>
        <authorList>
            <person name="Brejc K."/>
            <person name="Bian Q."/>
            <person name="Uzawa S."/>
            <person name="Wheeler B.S."/>
            <person name="Anderson E.C."/>
            <person name="King D.S."/>
            <person name="Kranzusch P.J."/>
            <person name="Preston C.G."/>
            <person name="Meyer B.J."/>
        </authorList>
    </citation>
    <scope>FUNCTION</scope>
    <scope>COFACTOR</scope>
</reference>
<proteinExistence type="evidence at protein level"/>
<comment type="function">
    <text evidence="6">Histone demethylase that specifically demethylates dimethylated 'Lys-20' of histone H4 (H4K20me2), thereby modulating chromosome architecture.</text>
</comment>
<comment type="cofactor">
    <cofactor evidence="6">
        <name>Fe(2+)</name>
        <dbReference type="ChEBI" id="CHEBI:29033"/>
    </cofactor>
    <text evidence="2">Binds 1 Fe(2+) ion per subunit.</text>
</comment>
<comment type="subcellular location">
    <subcellularLocation>
        <location evidence="5">Nucleus</location>
    </subcellularLocation>
</comment>
<comment type="tissue specificity">
    <text evidence="5">Testis. Expressed exclusively in haploid round spermatids.</text>
</comment>
<comment type="developmental stage">
    <text evidence="5">Expressed abundantly in the testis at 23 days after birth and later. Expressed exclusively in the germ cells.</text>
</comment>
<comment type="PTM">
    <text evidence="9">Phosphorylated by PKA.</text>
</comment>
<comment type="similarity">
    <text evidence="8">Belongs to the round spermatid basic protein 1 family.</text>
</comment>
<comment type="sequence caution" evidence="8">
    <conflict type="erroneous initiation">
        <sequence resource="EMBL-CDS" id="AAH94667"/>
    </conflict>
</comment>
<comment type="sequence caution" evidence="8">
    <conflict type="erroneous initiation">
        <sequence resource="EMBL-CDS" id="BAC39967"/>
    </conflict>
</comment>
<comment type="sequence caution" evidence="8">
    <conflict type="erroneous initiation">
        <sequence resource="EMBL-CDS" id="BAE23712"/>
    </conflict>
</comment>
<comment type="sequence caution" evidence="8">
    <conflict type="erroneous initiation">
        <sequence resource="EMBL-CDS" id="CAQ12904"/>
    </conflict>
</comment>
<sequence length="795" mass="89251">MFRSTRTTDQWRVGERLQCPAGHARAALARTADGGAVGPFKCVFVGEMAAQVGAVRVVRAVAAQEEPDKEGKEKPHVGVSPRGVKRQRRASSGGSQEKRGRPSQDPPLAPPHRRRRSRQHPGPLPPTNAAPTVPGPVEPLLLPPPPPPSLAPAGPTVAAPLPAPGTSALFTFSPLTVSAAGPKHKGHKERHKHHHHRGSDGDPGACVPGDLKHKDKQENGERSGGVPLIKAPKRETADENGKTQRADDFVLKKIKKKKKKKHREDMRGRRLKMYNKEVQTVCAGLTRISKEILTQGQLNSTSGVNKESFRYLKDEQLCRLNLGMQEYRVPQGVQTPFTTHQEHSIRRNFLKTGTKFSNFIHEEHQSNGGALVLHAYMDELSFLSPMEMERFSEEFLALTFSENEKNAAYYALAIVHGAAAYLPDFLDYFAFNFPNTPVKMEILGKKDIETTTISNFHTQVNRTYCCGTYRAGPMRQISLVGAVDEEVGDYFPEFLDMLEESPFLKMTLPWGTLSSLQLQCRSQSDDGPIMWVRPGEQMIPTADMPKSPFKRRRSMNEIKNLQYLPRTSEPREVLFEDRTRAHADHVGQGFDWQSTAAVGVLKAVQFGEWSDQPRITKDVICFHAEDFTDVVQRLQLDLHEPPVSQCVQWVDEAKLNQMRREGIRYARIQLCDNDIYFIPRNVIHQFKTVSAVCSLAWHIRLKQYHPVVETAQNTESNSNMDCGLEVDSQCVRIKTESEERCTEMQLLTTASPSFPPPSELHLQDLKTQPLPVFKVESRLDSDQQHSLQAHPSTPV</sequence>
<accession>Q80T69</accession>
<accession>B0V3N6</accession>
<accession>B9EI66</accession>
<accession>Q3UUB5</accession>
<accession>Q4VC18</accession>
<accession>Q7TNJ3</accession>
<accession>Q8C2Z3</accession>
<evidence type="ECO:0000250" key="1">
    <source>
        <dbReference type="UniProtKB" id="Q5VWQ0"/>
    </source>
</evidence>
<evidence type="ECO:0000250" key="2">
    <source>
        <dbReference type="UniProtKB" id="Q9GRZ3"/>
    </source>
</evidence>
<evidence type="ECO:0000255" key="3"/>
<evidence type="ECO:0000256" key="4">
    <source>
        <dbReference type="SAM" id="MobiDB-lite"/>
    </source>
</evidence>
<evidence type="ECO:0000269" key="5">
    <source>
    </source>
</evidence>
<evidence type="ECO:0000269" key="6">
    <source>
    </source>
</evidence>
<evidence type="ECO:0000303" key="7">
    <source>
    </source>
</evidence>
<evidence type="ECO:0000305" key="8"/>
<evidence type="ECO:0000305" key="9">
    <source>
    </source>
</evidence>
<gene>
    <name type="primary">Rsbn1</name>
    <name type="synonym">Kiaa3002</name>
    <name type="synonym">Rsbn</name>
</gene>